<comment type="similarity">
    <text evidence="1">Belongs to the UPF0398 family.</text>
</comment>
<sequence length="171" mass="20438">MTAILITGYRSFEIGIFDHKDPRVSIIKQAIRKDLIGYLENGVDWFIFTGNLGFEQWALEVANELKEEYPLQIATIFLFETHGDRWNEKNQEVLSQFRAVDFVKYYFPNYEQPTQFSQYYQFLLEKTEGAYVFYDTENETNLKYFLKKAKDMPHYQLLLLTFDRLNDMSQS</sequence>
<reference key="1">
    <citation type="journal article" date="2005" name="J. Infect. Dis.">
        <title>Genome sequence of a serotype M28 strain of group A Streptococcus: potential new insights into puerperal sepsis and bacterial disease specificity.</title>
        <authorList>
            <person name="Green N.M."/>
            <person name="Zhang S."/>
            <person name="Porcella S.F."/>
            <person name="Nagiec M.J."/>
            <person name="Barbian K.D."/>
            <person name="Beres S.B."/>
            <person name="Lefebvre R.B."/>
            <person name="Musser J.M."/>
        </authorList>
    </citation>
    <scope>NUCLEOTIDE SEQUENCE [LARGE SCALE GENOMIC DNA]</scope>
    <source>
        <strain>MGAS6180</strain>
    </source>
</reference>
<accession>Q48S06</accession>
<proteinExistence type="inferred from homology"/>
<protein>
    <recommendedName>
        <fullName evidence="1">UPF0398 protein M28_Spy1394</fullName>
    </recommendedName>
</protein>
<feature type="chain" id="PRO_0000267192" description="UPF0398 protein M28_Spy1394">
    <location>
        <begin position="1"/>
        <end position="171"/>
    </location>
</feature>
<gene>
    <name type="ordered locus">M28_Spy1394</name>
</gene>
<evidence type="ECO:0000255" key="1">
    <source>
        <dbReference type="HAMAP-Rule" id="MF_01575"/>
    </source>
</evidence>
<organism>
    <name type="scientific">Streptococcus pyogenes serotype M28 (strain MGAS6180)</name>
    <dbReference type="NCBI Taxonomy" id="319701"/>
    <lineage>
        <taxon>Bacteria</taxon>
        <taxon>Bacillati</taxon>
        <taxon>Bacillota</taxon>
        <taxon>Bacilli</taxon>
        <taxon>Lactobacillales</taxon>
        <taxon>Streptococcaceae</taxon>
        <taxon>Streptococcus</taxon>
    </lineage>
</organism>
<dbReference type="EMBL" id="CP000056">
    <property type="protein sequence ID" value="AAX72504.1"/>
    <property type="molecule type" value="Genomic_DNA"/>
</dbReference>
<dbReference type="RefSeq" id="WP_011285056.1">
    <property type="nucleotide sequence ID" value="NC_007296.2"/>
</dbReference>
<dbReference type="SMR" id="Q48S06"/>
<dbReference type="KEGG" id="spb:M28_Spy1394"/>
<dbReference type="HOGENOM" id="CLU_105319_0_0_9"/>
<dbReference type="Gene3D" id="3.40.50.450">
    <property type="match status" value="1"/>
</dbReference>
<dbReference type="HAMAP" id="MF_01575">
    <property type="entry name" value="UPF0398"/>
    <property type="match status" value="1"/>
</dbReference>
<dbReference type="InterPro" id="IPR010697">
    <property type="entry name" value="YspA"/>
</dbReference>
<dbReference type="NCBIfam" id="NF010181">
    <property type="entry name" value="PRK13660.1"/>
    <property type="match status" value="1"/>
</dbReference>
<dbReference type="PANTHER" id="PTHR38440:SF1">
    <property type="entry name" value="UPF0398 PROTEIN SPR0331"/>
    <property type="match status" value="1"/>
</dbReference>
<dbReference type="PANTHER" id="PTHR38440">
    <property type="entry name" value="UPF0398 PROTEIN YPSA"/>
    <property type="match status" value="1"/>
</dbReference>
<dbReference type="Pfam" id="PF06908">
    <property type="entry name" value="YpsA"/>
    <property type="match status" value="1"/>
</dbReference>
<dbReference type="PIRSF" id="PIRSF021290">
    <property type="entry name" value="DUF1273"/>
    <property type="match status" value="1"/>
</dbReference>
<dbReference type="SUPFAM" id="SSF102405">
    <property type="entry name" value="MCP/YpsA-like"/>
    <property type="match status" value="1"/>
</dbReference>
<name>Y1394_STRPM</name>